<comment type="function">
    <text evidence="2 3">Catalyzes the transfer of the methyl group from monomethylamine to the corrinoid cofactor of MtmC (MtmC1 or MtmC2).</text>
</comment>
<comment type="catalytic activity">
    <reaction evidence="2">
        <text>Co(I)-[methylamine-specific corrinoid protein] + methylamine + H(+) = methyl-Co(III)-[methylamine-specific corrinoid protein] + NH4(+)</text>
        <dbReference type="Rhea" id="RHEA:26059"/>
        <dbReference type="Rhea" id="RHEA-COMP:11120"/>
        <dbReference type="Rhea" id="RHEA-COMP:11121"/>
        <dbReference type="ChEBI" id="CHEBI:15378"/>
        <dbReference type="ChEBI" id="CHEBI:28938"/>
        <dbReference type="ChEBI" id="CHEBI:59338"/>
        <dbReference type="ChEBI" id="CHEBI:85033"/>
        <dbReference type="ChEBI" id="CHEBI:85035"/>
        <dbReference type="EC" id="2.1.1.248"/>
    </reaction>
</comment>
<comment type="pathway">
    <text>One-carbon metabolism; methanogenesis from methylamine.</text>
</comment>
<comment type="subunit">
    <text>Dimer of homotrimers. Can form a complex with MtmC (MtmC1 or MtmC2).</text>
</comment>
<comment type="mass spectrometry"/>
<comment type="miscellaneous">
    <text>MtmB1 transcript is abundant relative to the mtmB2 transcript.</text>
</comment>
<comment type="similarity">
    <text evidence="4">Belongs to the monomethylamine methyltransferase family.</text>
</comment>
<comment type="online information" name="Protein Spotlight">
    <link uri="https://www.proteinspotlight.org/back_issues/025"/>
    <text>Life's jokers - Issue 25 of August 2002</text>
</comment>
<gene>
    <name type="primary">mtmB1</name>
    <name type="synonym">mtmB</name>
</gene>
<keyword id="KW-0002">3D-structure</keyword>
<keyword id="KW-0903">Direct protein sequencing</keyword>
<keyword id="KW-0484">Methanogenesis</keyword>
<keyword id="KW-0489">Methyltransferase</keyword>
<keyword id="KW-0669">Pyrrolysine</keyword>
<keyword id="KW-0808">Transferase</keyword>
<accession>O30642</accession>
<accession>O52752</accession>
<name>MTMB1_METBA</name>
<protein>
    <recommendedName>
        <fullName>Monomethylamine methyltransferase MtmB1</fullName>
        <shortName>MMA methyltransferase 1</shortName>
        <shortName>MMAMT 1</shortName>
        <ecNumber>2.1.1.248</ecNumber>
    </recommendedName>
</protein>
<proteinExistence type="evidence at protein level"/>
<dbReference type="EC" id="2.1.1.248"/>
<dbReference type="EMBL" id="AF013713">
    <property type="protein sequence ID" value="AAC38636.3"/>
    <property type="molecule type" value="Genomic_DNA"/>
</dbReference>
<dbReference type="EMBL" id="AF046875">
    <property type="protein sequence ID" value="AAC38637.1"/>
    <property type="molecule type" value="Genomic_DNA"/>
</dbReference>
<dbReference type="PDB" id="1L2Q">
    <property type="method" value="X-ray"/>
    <property type="resolution" value="1.70 A"/>
    <property type="chains" value="A=1-458"/>
</dbReference>
<dbReference type="PDB" id="1NTH">
    <property type="method" value="X-ray"/>
    <property type="resolution" value="1.55 A"/>
    <property type="chains" value="A=1-457"/>
</dbReference>
<dbReference type="PDB" id="1TV2">
    <property type="method" value="X-ray"/>
    <property type="resolution" value="2.00 A"/>
    <property type="chains" value="A=1-457"/>
</dbReference>
<dbReference type="PDB" id="1TV3">
    <property type="method" value="X-ray"/>
    <property type="resolution" value="2.20 A"/>
    <property type="chains" value="A=1-457"/>
</dbReference>
<dbReference type="PDB" id="1TV4">
    <property type="method" value="X-ray"/>
    <property type="resolution" value="1.80 A"/>
    <property type="chains" value="A=1-457"/>
</dbReference>
<dbReference type="PDBsum" id="1L2Q"/>
<dbReference type="PDBsum" id="1NTH"/>
<dbReference type="PDBsum" id="1TV2"/>
<dbReference type="PDBsum" id="1TV3"/>
<dbReference type="PDBsum" id="1TV4"/>
<dbReference type="SMR" id="O30642"/>
<dbReference type="BioCyc" id="MetaCyc:MONOMER-12210"/>
<dbReference type="BRENDA" id="2.1.1.248">
    <property type="organism ID" value="3250"/>
</dbReference>
<dbReference type="BRENDA" id="2.1.1.249">
    <property type="organism ID" value="3250"/>
</dbReference>
<dbReference type="UniPathway" id="UPA00643"/>
<dbReference type="EvolutionaryTrace" id="O30642"/>
<dbReference type="GO" id="GO:0043852">
    <property type="term" value="F:monomethylamine methyltransferase activity"/>
    <property type="evidence" value="ECO:0000314"/>
    <property type="project" value="MENGO"/>
</dbReference>
<dbReference type="GO" id="GO:0015948">
    <property type="term" value="P:methanogenesis"/>
    <property type="evidence" value="ECO:0007669"/>
    <property type="project" value="UniProtKB-KW"/>
</dbReference>
<dbReference type="GO" id="GO:0032259">
    <property type="term" value="P:methylation"/>
    <property type="evidence" value="ECO:0007669"/>
    <property type="project" value="UniProtKB-KW"/>
</dbReference>
<dbReference type="FunFam" id="3.20.20.460:FF:000001">
    <property type="entry name" value="Monomethylamine methyltransferase MtmB1"/>
    <property type="match status" value="1"/>
</dbReference>
<dbReference type="Gene3D" id="3.20.20.460">
    <property type="entry name" value="Monomethylamine methyltransferase MtmB"/>
    <property type="match status" value="1"/>
</dbReference>
<dbReference type="InterPro" id="IPR008031">
    <property type="entry name" value="MtmB_MeTrfase"/>
</dbReference>
<dbReference type="InterPro" id="IPR036655">
    <property type="entry name" value="MtmB_sf"/>
</dbReference>
<dbReference type="Pfam" id="PF05369">
    <property type="entry name" value="MtmB"/>
    <property type="match status" value="1"/>
</dbReference>
<dbReference type="SUPFAM" id="SSF75098">
    <property type="entry name" value="Monomethylamine methyltransferase MtmB"/>
    <property type="match status" value="1"/>
</dbReference>
<reference key="1">
    <citation type="journal article" date="1998" name="J. Bacteriol.">
        <title>Clustered genes encoding the methyltransferases of methanogenesis from monomethylamine.</title>
        <authorList>
            <person name="Burke S.A."/>
            <person name="Lo S.L."/>
            <person name="Krzycki J.A."/>
        </authorList>
    </citation>
    <scope>NUCLEOTIDE SEQUENCE [GENOMIC DNA]</scope>
    <scope>FUNCTION</scope>
    <source>
        <strain>ATCC 43569 / MS / DSM 800 / JCM 10043 / NBRC 100474</strain>
        <strain>NIH</strain>
    </source>
</reference>
<reference key="2">
    <citation type="journal article" date="2001" name="J. Biol. Chem.">
        <title>The amber codon in the gene encoding the monomethylamine methyltransferase isolated from Methanosarcina barkeri is translated as a sense codon.</title>
        <authorList>
            <person name="James C.M."/>
            <person name="Ferguson T.K."/>
            <person name="Leykam J.F."/>
            <person name="Krzycki J.A."/>
        </authorList>
    </citation>
    <scope>PROTEIN SEQUENCE OF 2-7; 22-28; 189-213; 251-255; 408-411 AND 453-458</scope>
    <scope>MASS SPECTROMETRY</scope>
    <source>
        <strain>ATCC 43569 / MS / DSM 800 / JCM 10043 / NBRC 100474</strain>
    </source>
</reference>
<reference key="3">
    <citation type="journal article" date="1997" name="J. Biol. Chem.">
        <title>Reconstitution of monomethylamine:coenzyme M methyl transfer with a corrinoid protein and two methyltransferases purified from Methanosarcina barkeri.</title>
        <authorList>
            <person name="Burke S.A."/>
            <person name="Krzycki J.A."/>
        </authorList>
    </citation>
    <scope>FUNCTION</scope>
    <scope>CATALYTIC ACTIVITY</scope>
    <source>
        <strain>ATCC 43569 / MS / DSM 800 / JCM 10043 / NBRC 100474</strain>
    </source>
</reference>
<reference key="4">
    <citation type="journal article" date="2005" name="J. Biol. Chem.">
        <title>The residue mass of L-pyrrolysine in three distinct methylamine methyltransferases.</title>
        <authorList>
            <person name="Soares J.A."/>
            <person name="Zhang L."/>
            <person name="Pitsch R.L."/>
            <person name="Kleinholz N.M."/>
            <person name="Jones R.B."/>
            <person name="Wolff J.J."/>
            <person name="Amster J."/>
            <person name="Green-Church K.B."/>
            <person name="Krzycki J.A."/>
        </authorList>
    </citation>
    <scope>PYRROLYSINE AT PYL-202</scope>
    <source>
        <strain>ATCC 43569 / MS / DSM 800 / JCM 10043 / NBRC 100474</strain>
    </source>
</reference>
<reference key="5">
    <citation type="journal article" date="2002" name="Science">
        <title>A new UAG-encoded residue in the structure of a methanogen methyltransferase.</title>
        <authorList>
            <person name="Hao B."/>
            <person name="Gong W."/>
            <person name="Ferguson T.K."/>
            <person name="James C.M."/>
            <person name="Krzycki J.A."/>
            <person name="Chan M.K."/>
        </authorList>
    </citation>
    <scope>X-RAY CRYSTALLOGRAPHY (1.55 ANGSTROMS)</scope>
    <scope>PYRROLYSINE AT PYL-202</scope>
    <scope>IDENTIFICATION BY MASS SPECTROMETRY</scope>
</reference>
<organism>
    <name type="scientific">Methanosarcina barkeri</name>
    <dbReference type="NCBI Taxonomy" id="2208"/>
    <lineage>
        <taxon>Archaea</taxon>
        <taxon>Methanobacteriati</taxon>
        <taxon>Methanobacteriota</taxon>
        <taxon>Stenosarchaea group</taxon>
        <taxon>Methanomicrobia</taxon>
        <taxon>Methanosarcinales</taxon>
        <taxon>Methanosarcinaceae</taxon>
        <taxon>Methanosarcina</taxon>
    </lineage>
</organism>
<feature type="initiator methionine" description="Removed" evidence="1">
    <location>
        <position position="1"/>
    </location>
</feature>
<feature type="chain" id="PRO_0000216550" description="Monomethylamine methyltransferase MtmB1">
    <location>
        <begin position="2"/>
        <end position="458"/>
    </location>
</feature>
<feature type="non-standard amino acid" description="Pyrrolysine">
    <location>
        <position position="202"/>
    </location>
</feature>
<feature type="sequence variant" description="In strain: NIH.">
    <original>A</original>
    <variation>S</variation>
    <location>
        <position position="36"/>
    </location>
</feature>
<feature type="sequence variant" description="In strain: NIH.">
    <original>T</original>
    <variation>A</variation>
    <location>
        <position position="219"/>
    </location>
</feature>
<feature type="helix" evidence="5">
    <location>
        <begin position="9"/>
        <end position="18"/>
    </location>
</feature>
<feature type="strand" evidence="5">
    <location>
        <begin position="19"/>
        <end position="21"/>
    </location>
</feature>
<feature type="helix" evidence="5">
    <location>
        <begin position="24"/>
        <end position="28"/>
    </location>
</feature>
<feature type="helix" evidence="5">
    <location>
        <begin position="31"/>
        <end position="42"/>
    </location>
</feature>
<feature type="helix" evidence="5">
    <location>
        <begin position="56"/>
        <end position="73"/>
    </location>
</feature>
<feature type="strand" evidence="5">
    <location>
        <begin position="75"/>
        <end position="77"/>
    </location>
</feature>
<feature type="turn" evidence="5">
    <location>
        <begin position="78"/>
        <end position="81"/>
    </location>
</feature>
<feature type="strand" evidence="5">
    <location>
        <begin position="82"/>
        <end position="84"/>
    </location>
</feature>
<feature type="helix" evidence="5">
    <location>
        <begin position="88"/>
        <end position="95"/>
    </location>
</feature>
<feature type="strand" evidence="5">
    <location>
        <begin position="101"/>
        <end position="105"/>
    </location>
</feature>
<feature type="helix" evidence="5">
    <location>
        <begin position="107"/>
        <end position="109"/>
    </location>
</feature>
<feature type="strand" evidence="5">
    <location>
        <begin position="111"/>
        <end position="114"/>
    </location>
</feature>
<feature type="strand" evidence="5">
    <location>
        <begin position="125"/>
        <end position="129"/>
    </location>
</feature>
<feature type="helix" evidence="5">
    <location>
        <begin position="137"/>
        <end position="139"/>
    </location>
</feature>
<feature type="helix" evidence="5">
    <location>
        <begin position="140"/>
        <end position="148"/>
    </location>
</feature>
<feature type="strand" evidence="7">
    <location>
        <begin position="155"/>
        <end position="157"/>
    </location>
</feature>
<feature type="strand" evidence="5">
    <location>
        <begin position="160"/>
        <end position="162"/>
    </location>
</feature>
<feature type="helix" evidence="5">
    <location>
        <begin position="174"/>
        <end position="193"/>
    </location>
</feature>
<feature type="strand" evidence="7">
    <location>
        <begin position="201"/>
        <end position="203"/>
    </location>
</feature>
<feature type="helix" evidence="5">
    <location>
        <begin position="210"/>
        <end position="214"/>
    </location>
</feature>
<feature type="strand" evidence="5">
    <location>
        <begin position="226"/>
        <end position="231"/>
    </location>
</feature>
<feature type="turn" evidence="5">
    <location>
        <begin position="234"/>
        <end position="236"/>
    </location>
</feature>
<feature type="helix" evidence="5">
    <location>
        <begin position="240"/>
        <end position="251"/>
    </location>
</feature>
<feature type="strand" evidence="5">
    <location>
        <begin position="255"/>
        <end position="259"/>
    </location>
</feature>
<feature type="strand" evidence="5">
    <location>
        <begin position="266"/>
        <end position="268"/>
    </location>
</feature>
<feature type="helix" evidence="5">
    <location>
        <begin position="271"/>
        <end position="288"/>
    </location>
</feature>
<feature type="strand" evidence="5">
    <location>
        <begin position="292"/>
        <end position="296"/>
    </location>
</feature>
<feature type="turn" evidence="5">
    <location>
        <begin position="301"/>
        <end position="303"/>
    </location>
</feature>
<feature type="helix" evidence="5">
    <location>
        <begin position="309"/>
        <end position="325"/>
    </location>
</feature>
<feature type="strand" evidence="5">
    <location>
        <begin position="330"/>
        <end position="333"/>
    </location>
</feature>
<feature type="strand" evidence="5">
    <location>
        <begin position="340"/>
        <end position="342"/>
    </location>
</feature>
<feature type="helix" evidence="5">
    <location>
        <begin position="343"/>
        <end position="359"/>
    </location>
</feature>
<feature type="strand" evidence="5">
    <location>
        <begin position="362"/>
        <end position="366"/>
    </location>
</feature>
<feature type="helix" evidence="5">
    <location>
        <begin position="370"/>
        <end position="372"/>
    </location>
</feature>
<feature type="helix" evidence="5">
    <location>
        <begin position="380"/>
        <end position="393"/>
    </location>
</feature>
<feature type="helix" evidence="5">
    <location>
        <begin position="398"/>
        <end position="410"/>
    </location>
</feature>
<feature type="turn" evidence="5">
    <location>
        <begin position="411"/>
        <end position="414"/>
    </location>
</feature>
<feature type="helix" evidence="6">
    <location>
        <begin position="416"/>
        <end position="418"/>
    </location>
</feature>
<feature type="helix" evidence="5">
    <location>
        <begin position="425"/>
        <end position="428"/>
    </location>
</feature>
<feature type="turn" evidence="5">
    <location>
        <begin position="431"/>
        <end position="434"/>
    </location>
</feature>
<feature type="helix" evidence="5">
    <location>
        <begin position="438"/>
        <end position="454"/>
    </location>
</feature>
<sequence>MTFRKSFDCYDFYDRAKVGEKCTQDDWDLMKIPMKAMELKQKYGLDFKGEFIPTDKDMMEKLFKAGFEMLLECGIYCTDTHRIVKYTEDEIWDAINNVQKEFVLGTGRDAVNVRKRSVGDKAKPIVQGGPTGSPISEDVFMPVHMSYALEKEVDTIVNGVMTSVRGKSPIPKSPYEVLAAKTETRLIKNACAMAGRPGMGVOGPETSLSAQGNISADCTGGMTCTDSHEVSQLNELKIDLDAISVIAHYKGNSDIIMDEQMPIFGGYAGGIEETTIVDVATHINAVLMSSASWHLDGPVHIRWGSTNTRETLMIAGWACATISEFTDILSGNQYYPCAGPCTEMCLLEASAQSITDTASGREILSGVASAKGVVTDKTTGMEARMMGEVARATAGVEISEVNVILDKLVSLYEKNYASAPAGKTFQECYDVKTVTPTEEYMQVYDGARKKLEDLGLVF</sequence>
<evidence type="ECO:0000269" key="1">
    <source>
    </source>
</evidence>
<evidence type="ECO:0000269" key="2">
    <source>
    </source>
</evidence>
<evidence type="ECO:0000269" key="3">
    <source>
    </source>
</evidence>
<evidence type="ECO:0000305" key="4"/>
<evidence type="ECO:0007829" key="5">
    <source>
        <dbReference type="PDB" id="1NTH"/>
    </source>
</evidence>
<evidence type="ECO:0007829" key="6">
    <source>
        <dbReference type="PDB" id="1TV3"/>
    </source>
</evidence>
<evidence type="ECO:0007829" key="7">
    <source>
        <dbReference type="PDB" id="1TV4"/>
    </source>
</evidence>